<accession>B7KGN3</accession>
<organism>
    <name type="scientific">Gloeothece citriformis (strain PCC 7424)</name>
    <name type="common">Cyanothece sp. (strain PCC 7424)</name>
    <dbReference type="NCBI Taxonomy" id="65393"/>
    <lineage>
        <taxon>Bacteria</taxon>
        <taxon>Bacillati</taxon>
        <taxon>Cyanobacteriota</taxon>
        <taxon>Cyanophyceae</taxon>
        <taxon>Oscillatoriophycideae</taxon>
        <taxon>Chroococcales</taxon>
        <taxon>Aphanothecaceae</taxon>
        <taxon>Gloeothece</taxon>
        <taxon>Gloeothece citriformis</taxon>
    </lineage>
</organism>
<keyword id="KW-0028">Amino-acid biosynthesis</keyword>
<keyword id="KW-0963">Cytoplasm</keyword>
<keyword id="KW-0315">Glutamine amidotransferase</keyword>
<keyword id="KW-0368">Histidine biosynthesis</keyword>
<keyword id="KW-0378">Hydrolase</keyword>
<keyword id="KW-0456">Lyase</keyword>
<keyword id="KW-1185">Reference proteome</keyword>
<sequence length="211" mass="22874">MAVIAVIDYDMGNLHSACKGLENAGATPKITDSARDIEQADAIVLPGVGSFDPAVYHLRSRDLEAPLKDAIASGKPFLGICLGLQILFDASEEGSQPGLGIISGVVRRFRSEPGLTIPHMGWNQLEYTQANLPLWQELPFNPYVYFVHSYYVDPIDPSVRAATVTHGSQKVTAAIAKDNIMAVQFHPEKSSSNGLKILSNFVNQIRVKAIA</sequence>
<feature type="chain" id="PRO_1000119373" description="Imidazole glycerol phosphate synthase subunit HisH">
    <location>
        <begin position="1"/>
        <end position="211"/>
    </location>
</feature>
<feature type="domain" description="Glutamine amidotransferase type-1" evidence="1">
    <location>
        <begin position="3"/>
        <end position="211"/>
    </location>
</feature>
<feature type="active site" description="Nucleophile" evidence="1">
    <location>
        <position position="81"/>
    </location>
</feature>
<feature type="active site" evidence="1">
    <location>
        <position position="186"/>
    </location>
</feature>
<feature type="active site" evidence="1">
    <location>
        <position position="188"/>
    </location>
</feature>
<protein>
    <recommendedName>
        <fullName evidence="1">Imidazole glycerol phosphate synthase subunit HisH</fullName>
        <ecNumber evidence="1">4.3.2.10</ecNumber>
    </recommendedName>
    <alternativeName>
        <fullName evidence="1">IGP synthase glutaminase subunit</fullName>
        <ecNumber evidence="1">3.5.1.2</ecNumber>
    </alternativeName>
    <alternativeName>
        <fullName evidence="1">IGP synthase subunit HisH</fullName>
    </alternativeName>
    <alternativeName>
        <fullName evidence="1">ImGP synthase subunit HisH</fullName>
        <shortName evidence="1">IGPS subunit HisH</shortName>
    </alternativeName>
</protein>
<comment type="function">
    <text evidence="1">IGPS catalyzes the conversion of PRFAR and glutamine to IGP, AICAR and glutamate. The HisH subunit catalyzes the hydrolysis of glutamine to glutamate and ammonia as part of the synthesis of IGP and AICAR. The resulting ammonia molecule is channeled to the active site of HisF.</text>
</comment>
<comment type="catalytic activity">
    <reaction evidence="1">
        <text>5-[(5-phospho-1-deoxy-D-ribulos-1-ylimino)methylamino]-1-(5-phospho-beta-D-ribosyl)imidazole-4-carboxamide + L-glutamine = D-erythro-1-(imidazol-4-yl)glycerol 3-phosphate + 5-amino-1-(5-phospho-beta-D-ribosyl)imidazole-4-carboxamide + L-glutamate + H(+)</text>
        <dbReference type="Rhea" id="RHEA:24793"/>
        <dbReference type="ChEBI" id="CHEBI:15378"/>
        <dbReference type="ChEBI" id="CHEBI:29985"/>
        <dbReference type="ChEBI" id="CHEBI:58278"/>
        <dbReference type="ChEBI" id="CHEBI:58359"/>
        <dbReference type="ChEBI" id="CHEBI:58475"/>
        <dbReference type="ChEBI" id="CHEBI:58525"/>
        <dbReference type="EC" id="4.3.2.10"/>
    </reaction>
</comment>
<comment type="catalytic activity">
    <reaction evidence="1">
        <text>L-glutamine + H2O = L-glutamate + NH4(+)</text>
        <dbReference type="Rhea" id="RHEA:15889"/>
        <dbReference type="ChEBI" id="CHEBI:15377"/>
        <dbReference type="ChEBI" id="CHEBI:28938"/>
        <dbReference type="ChEBI" id="CHEBI:29985"/>
        <dbReference type="ChEBI" id="CHEBI:58359"/>
        <dbReference type="EC" id="3.5.1.2"/>
    </reaction>
</comment>
<comment type="pathway">
    <text evidence="1">Amino-acid biosynthesis; L-histidine biosynthesis; L-histidine from 5-phospho-alpha-D-ribose 1-diphosphate: step 5/9.</text>
</comment>
<comment type="subunit">
    <text evidence="1">Heterodimer of HisH and HisF.</text>
</comment>
<comment type="subcellular location">
    <subcellularLocation>
        <location evidence="1">Cytoplasm</location>
    </subcellularLocation>
</comment>
<dbReference type="EC" id="4.3.2.10" evidence="1"/>
<dbReference type="EC" id="3.5.1.2" evidence="1"/>
<dbReference type="EMBL" id="CP001291">
    <property type="protein sequence ID" value="ACK71960.1"/>
    <property type="molecule type" value="Genomic_DNA"/>
</dbReference>
<dbReference type="RefSeq" id="WP_015955553.1">
    <property type="nucleotide sequence ID" value="NC_011729.1"/>
</dbReference>
<dbReference type="SMR" id="B7KGN3"/>
<dbReference type="STRING" id="65393.PCC7424_3570"/>
<dbReference type="KEGG" id="cyc:PCC7424_3570"/>
<dbReference type="eggNOG" id="COG0118">
    <property type="taxonomic scope" value="Bacteria"/>
</dbReference>
<dbReference type="HOGENOM" id="CLU_071837_2_2_3"/>
<dbReference type="OrthoDB" id="9807137at2"/>
<dbReference type="UniPathway" id="UPA00031">
    <property type="reaction ID" value="UER00010"/>
</dbReference>
<dbReference type="Proteomes" id="UP000002384">
    <property type="component" value="Chromosome"/>
</dbReference>
<dbReference type="GO" id="GO:0005737">
    <property type="term" value="C:cytoplasm"/>
    <property type="evidence" value="ECO:0007669"/>
    <property type="project" value="UniProtKB-SubCell"/>
</dbReference>
<dbReference type="GO" id="GO:0004359">
    <property type="term" value="F:glutaminase activity"/>
    <property type="evidence" value="ECO:0007669"/>
    <property type="project" value="UniProtKB-EC"/>
</dbReference>
<dbReference type="GO" id="GO:0000107">
    <property type="term" value="F:imidazoleglycerol-phosphate synthase activity"/>
    <property type="evidence" value="ECO:0007669"/>
    <property type="project" value="UniProtKB-UniRule"/>
</dbReference>
<dbReference type="GO" id="GO:0016829">
    <property type="term" value="F:lyase activity"/>
    <property type="evidence" value="ECO:0007669"/>
    <property type="project" value="UniProtKB-KW"/>
</dbReference>
<dbReference type="GO" id="GO:0000105">
    <property type="term" value="P:L-histidine biosynthetic process"/>
    <property type="evidence" value="ECO:0007669"/>
    <property type="project" value="UniProtKB-UniRule"/>
</dbReference>
<dbReference type="CDD" id="cd01748">
    <property type="entry name" value="GATase1_IGP_Synthase"/>
    <property type="match status" value="1"/>
</dbReference>
<dbReference type="FunFam" id="3.40.50.880:FF:000009">
    <property type="entry name" value="Imidazole glycerol phosphate synthase subunit HisH"/>
    <property type="match status" value="1"/>
</dbReference>
<dbReference type="Gene3D" id="3.40.50.880">
    <property type="match status" value="1"/>
</dbReference>
<dbReference type="HAMAP" id="MF_00278">
    <property type="entry name" value="HisH"/>
    <property type="match status" value="1"/>
</dbReference>
<dbReference type="InterPro" id="IPR029062">
    <property type="entry name" value="Class_I_gatase-like"/>
</dbReference>
<dbReference type="InterPro" id="IPR017926">
    <property type="entry name" value="GATASE"/>
</dbReference>
<dbReference type="InterPro" id="IPR010139">
    <property type="entry name" value="Imidazole-glycPsynth_HisH"/>
</dbReference>
<dbReference type="NCBIfam" id="TIGR01855">
    <property type="entry name" value="IMP_synth_hisH"/>
    <property type="match status" value="1"/>
</dbReference>
<dbReference type="PANTHER" id="PTHR42701">
    <property type="entry name" value="IMIDAZOLE GLYCEROL PHOSPHATE SYNTHASE SUBUNIT HISH"/>
    <property type="match status" value="1"/>
</dbReference>
<dbReference type="PANTHER" id="PTHR42701:SF1">
    <property type="entry name" value="IMIDAZOLE GLYCEROL PHOSPHATE SYNTHASE SUBUNIT HISH"/>
    <property type="match status" value="1"/>
</dbReference>
<dbReference type="Pfam" id="PF00117">
    <property type="entry name" value="GATase"/>
    <property type="match status" value="1"/>
</dbReference>
<dbReference type="PIRSF" id="PIRSF000495">
    <property type="entry name" value="Amidotransf_hisH"/>
    <property type="match status" value="1"/>
</dbReference>
<dbReference type="SUPFAM" id="SSF52317">
    <property type="entry name" value="Class I glutamine amidotransferase-like"/>
    <property type="match status" value="1"/>
</dbReference>
<dbReference type="PROSITE" id="PS51273">
    <property type="entry name" value="GATASE_TYPE_1"/>
    <property type="match status" value="1"/>
</dbReference>
<gene>
    <name evidence="1" type="primary">hisH</name>
    <name type="ordered locus">PCC7424_3570</name>
</gene>
<proteinExistence type="inferred from homology"/>
<name>HIS5_GLOC7</name>
<evidence type="ECO:0000255" key="1">
    <source>
        <dbReference type="HAMAP-Rule" id="MF_00278"/>
    </source>
</evidence>
<reference key="1">
    <citation type="journal article" date="2011" name="MBio">
        <title>Novel metabolic attributes of the genus Cyanothece, comprising a group of unicellular nitrogen-fixing Cyanobacteria.</title>
        <authorList>
            <person name="Bandyopadhyay A."/>
            <person name="Elvitigala T."/>
            <person name="Welsh E."/>
            <person name="Stockel J."/>
            <person name="Liberton M."/>
            <person name="Min H."/>
            <person name="Sherman L.A."/>
            <person name="Pakrasi H.B."/>
        </authorList>
    </citation>
    <scope>NUCLEOTIDE SEQUENCE [LARGE SCALE GENOMIC DNA]</scope>
    <source>
        <strain>PCC 7424</strain>
    </source>
</reference>